<organism>
    <name type="scientific">Legionella pneumophila (strain Corby)</name>
    <dbReference type="NCBI Taxonomy" id="400673"/>
    <lineage>
        <taxon>Bacteria</taxon>
        <taxon>Pseudomonadati</taxon>
        <taxon>Pseudomonadota</taxon>
        <taxon>Gammaproteobacteria</taxon>
        <taxon>Legionellales</taxon>
        <taxon>Legionellaceae</taxon>
        <taxon>Legionella</taxon>
    </lineage>
</organism>
<sequence length="200" mass="22862">MPINLYSKAVFLKSAARVNQLPEDSGYEVAFAGRSNAGKSSALNCLTNNKNLARTSKTPGRTQLINLFSLDEQRRLVDLPGYGYAKVAMEVKLEWQKNLAHYLEARQCLRGLILLMDVRHPLKDLDQILVNWALHRELPVHILLTKADKLSRSEVKNAVLKVRQYYELAEHLVSVQAFSSVKKDGVEELISLLDRWYEWN</sequence>
<reference key="1">
    <citation type="submission" date="2006-11" db="EMBL/GenBank/DDBJ databases">
        <title>Identification and characterization of a new conjugation/ type IVA secretion system (trb/tra) of L. pneumophila Corby localized on a mobile genomic island.</title>
        <authorList>
            <person name="Gloeckner G."/>
            <person name="Albert-Weissenberger C."/>
            <person name="Weinmann E."/>
            <person name="Jacobi S."/>
            <person name="Schunder E."/>
            <person name="Steinert M."/>
            <person name="Buchrieser C."/>
            <person name="Hacker J."/>
            <person name="Heuner K."/>
        </authorList>
    </citation>
    <scope>NUCLEOTIDE SEQUENCE [LARGE SCALE GENOMIC DNA]</scope>
    <source>
        <strain>Corby</strain>
    </source>
</reference>
<keyword id="KW-0131">Cell cycle</keyword>
<keyword id="KW-0132">Cell division</keyword>
<keyword id="KW-0342">GTP-binding</keyword>
<keyword id="KW-0460">Magnesium</keyword>
<keyword id="KW-0479">Metal-binding</keyword>
<keyword id="KW-0547">Nucleotide-binding</keyword>
<keyword id="KW-0717">Septation</keyword>
<name>ENGB_LEGPC</name>
<evidence type="ECO:0000255" key="1">
    <source>
        <dbReference type="HAMAP-Rule" id="MF_00321"/>
    </source>
</evidence>
<accession>A5I9U4</accession>
<proteinExistence type="inferred from homology"/>
<protein>
    <recommendedName>
        <fullName evidence="1">Probable GTP-binding protein EngB</fullName>
    </recommendedName>
</protein>
<gene>
    <name evidence="1" type="primary">engB</name>
    <name type="ordered locus">LPC_0145</name>
</gene>
<feature type="chain" id="PRO_1000005827" description="Probable GTP-binding protein EngB">
    <location>
        <begin position="1"/>
        <end position="200"/>
    </location>
</feature>
<feature type="domain" description="EngB-type G" evidence="1">
    <location>
        <begin position="25"/>
        <end position="199"/>
    </location>
</feature>
<feature type="binding site" evidence="1">
    <location>
        <begin position="33"/>
        <end position="40"/>
    </location>
    <ligand>
        <name>GTP</name>
        <dbReference type="ChEBI" id="CHEBI:37565"/>
    </ligand>
</feature>
<feature type="binding site" evidence="1">
    <location>
        <position position="40"/>
    </location>
    <ligand>
        <name>Mg(2+)</name>
        <dbReference type="ChEBI" id="CHEBI:18420"/>
    </ligand>
</feature>
<feature type="binding site" evidence="1">
    <location>
        <begin position="60"/>
        <end position="64"/>
    </location>
    <ligand>
        <name>GTP</name>
        <dbReference type="ChEBI" id="CHEBI:37565"/>
    </ligand>
</feature>
<feature type="binding site" evidence="1">
    <location>
        <position position="62"/>
    </location>
    <ligand>
        <name>Mg(2+)</name>
        <dbReference type="ChEBI" id="CHEBI:18420"/>
    </ligand>
</feature>
<feature type="binding site" evidence="1">
    <location>
        <begin position="78"/>
        <end position="81"/>
    </location>
    <ligand>
        <name>GTP</name>
        <dbReference type="ChEBI" id="CHEBI:37565"/>
    </ligand>
</feature>
<feature type="binding site" evidence="1">
    <location>
        <begin position="145"/>
        <end position="148"/>
    </location>
    <ligand>
        <name>GTP</name>
        <dbReference type="ChEBI" id="CHEBI:37565"/>
    </ligand>
</feature>
<feature type="binding site" evidence="1">
    <location>
        <begin position="178"/>
        <end position="180"/>
    </location>
    <ligand>
        <name>GTP</name>
        <dbReference type="ChEBI" id="CHEBI:37565"/>
    </ligand>
</feature>
<comment type="function">
    <text evidence="1">Necessary for normal cell division and for the maintenance of normal septation.</text>
</comment>
<comment type="cofactor">
    <cofactor evidence="1">
        <name>Mg(2+)</name>
        <dbReference type="ChEBI" id="CHEBI:18420"/>
    </cofactor>
</comment>
<comment type="similarity">
    <text evidence="1">Belongs to the TRAFAC class TrmE-Era-EngA-EngB-Septin-like GTPase superfamily. EngB GTPase family.</text>
</comment>
<dbReference type="EMBL" id="CP000675">
    <property type="protein sequence ID" value="ABQ54144.1"/>
    <property type="molecule type" value="Genomic_DNA"/>
</dbReference>
<dbReference type="SMR" id="A5I9U4"/>
<dbReference type="KEGG" id="lpc:LPC_0145"/>
<dbReference type="HOGENOM" id="CLU_033732_1_0_6"/>
<dbReference type="GO" id="GO:0005829">
    <property type="term" value="C:cytosol"/>
    <property type="evidence" value="ECO:0007669"/>
    <property type="project" value="TreeGrafter"/>
</dbReference>
<dbReference type="GO" id="GO:0005525">
    <property type="term" value="F:GTP binding"/>
    <property type="evidence" value="ECO:0007669"/>
    <property type="project" value="UniProtKB-UniRule"/>
</dbReference>
<dbReference type="GO" id="GO:0046872">
    <property type="term" value="F:metal ion binding"/>
    <property type="evidence" value="ECO:0007669"/>
    <property type="project" value="UniProtKB-KW"/>
</dbReference>
<dbReference type="GO" id="GO:0000917">
    <property type="term" value="P:division septum assembly"/>
    <property type="evidence" value="ECO:0007669"/>
    <property type="project" value="UniProtKB-KW"/>
</dbReference>
<dbReference type="CDD" id="cd01876">
    <property type="entry name" value="YihA_EngB"/>
    <property type="match status" value="1"/>
</dbReference>
<dbReference type="FunFam" id="3.40.50.300:FF:000098">
    <property type="entry name" value="Probable GTP-binding protein EngB"/>
    <property type="match status" value="1"/>
</dbReference>
<dbReference type="Gene3D" id="3.40.50.300">
    <property type="entry name" value="P-loop containing nucleotide triphosphate hydrolases"/>
    <property type="match status" value="1"/>
</dbReference>
<dbReference type="HAMAP" id="MF_00321">
    <property type="entry name" value="GTPase_EngB"/>
    <property type="match status" value="1"/>
</dbReference>
<dbReference type="InterPro" id="IPR030393">
    <property type="entry name" value="G_ENGB_dom"/>
</dbReference>
<dbReference type="InterPro" id="IPR006073">
    <property type="entry name" value="GTP-bd"/>
</dbReference>
<dbReference type="InterPro" id="IPR019987">
    <property type="entry name" value="GTP-bd_ribosome_bio_YsxC"/>
</dbReference>
<dbReference type="InterPro" id="IPR027417">
    <property type="entry name" value="P-loop_NTPase"/>
</dbReference>
<dbReference type="NCBIfam" id="TIGR03598">
    <property type="entry name" value="GTPase_YsxC"/>
    <property type="match status" value="1"/>
</dbReference>
<dbReference type="PANTHER" id="PTHR11649:SF13">
    <property type="entry name" value="ENGB-TYPE G DOMAIN-CONTAINING PROTEIN"/>
    <property type="match status" value="1"/>
</dbReference>
<dbReference type="PANTHER" id="PTHR11649">
    <property type="entry name" value="MSS1/TRME-RELATED GTP-BINDING PROTEIN"/>
    <property type="match status" value="1"/>
</dbReference>
<dbReference type="Pfam" id="PF01926">
    <property type="entry name" value="MMR_HSR1"/>
    <property type="match status" value="1"/>
</dbReference>
<dbReference type="SUPFAM" id="SSF52540">
    <property type="entry name" value="P-loop containing nucleoside triphosphate hydrolases"/>
    <property type="match status" value="1"/>
</dbReference>
<dbReference type="PROSITE" id="PS51706">
    <property type="entry name" value="G_ENGB"/>
    <property type="match status" value="1"/>
</dbReference>